<protein>
    <recommendedName>
        <fullName evidence="1">S-adenosylmethionine:tRNA ribosyltransferase-isomerase</fullName>
        <ecNumber evidence="1">2.4.99.17</ecNumber>
    </recommendedName>
    <alternativeName>
        <fullName evidence="1">Queuosine biosynthesis protein QueA</fullName>
    </alternativeName>
</protein>
<keyword id="KW-0963">Cytoplasm</keyword>
<keyword id="KW-0671">Queuosine biosynthesis</keyword>
<keyword id="KW-1185">Reference proteome</keyword>
<keyword id="KW-0949">S-adenosyl-L-methionine</keyword>
<keyword id="KW-0808">Transferase</keyword>
<proteinExistence type="inferred from homology"/>
<reference key="1">
    <citation type="journal article" date="2006" name="Proc. Natl. Acad. Sci. U.S.A.">
        <title>Genome sequence of Synechococcus CC9311: insights into adaptation to a coastal environment.</title>
        <authorList>
            <person name="Palenik B."/>
            <person name="Ren Q."/>
            <person name="Dupont C.L."/>
            <person name="Myers G.S."/>
            <person name="Heidelberg J.F."/>
            <person name="Badger J.H."/>
            <person name="Madupu R."/>
            <person name="Nelson W.C."/>
            <person name="Brinkac L.M."/>
            <person name="Dodson R.J."/>
            <person name="Durkin A.S."/>
            <person name="Daugherty S.C."/>
            <person name="Sullivan S.A."/>
            <person name="Khouri H."/>
            <person name="Mohamoud Y."/>
            <person name="Halpin R."/>
            <person name="Paulsen I.T."/>
        </authorList>
    </citation>
    <scope>NUCLEOTIDE SEQUENCE [LARGE SCALE GENOMIC DNA]</scope>
    <source>
        <strain>CC9311</strain>
    </source>
</reference>
<name>QUEA_SYNS3</name>
<evidence type="ECO:0000255" key="1">
    <source>
        <dbReference type="HAMAP-Rule" id="MF_00113"/>
    </source>
</evidence>
<feature type="chain" id="PRO_1000015300" description="S-adenosylmethionine:tRNA ribosyltransferase-isomerase">
    <location>
        <begin position="1"/>
        <end position="369"/>
    </location>
</feature>
<sequence>MPDSRDLQLSSYDYVLPEDRIAQAPVEPRHDARLLVVPPAERSLSELRHQRVWDWQQELQPGDLLVVNDTRVLKARLRVRRSGGGLGELLVLEPRGEGRWLCLARPAKRMRPGDQLWLEALEQEPLSLAVLANDAASGGRIVQFPPDCVDALSLEGLLERYGEVPLPPYITRHDSSDQERYQTRYATRPGAVAAPTAGLHLSDALLAAIAERGVALAHVTLHVGLGTFRPVETEDLSDLTLHSEWVEVRAEVVEAVLACRARGGRVIAVGTTSVRALEAAAAGGGGLQPLKGPVDLVIQPGYRFQVVQGLLTNFHLPKSSLLLLVSALIGRDQLLQIYNAAIEEMYRFYSYGDAMWIAPEAVLFDARPE</sequence>
<accession>Q0ICI5</accession>
<organism>
    <name type="scientific">Synechococcus sp. (strain CC9311)</name>
    <dbReference type="NCBI Taxonomy" id="64471"/>
    <lineage>
        <taxon>Bacteria</taxon>
        <taxon>Bacillati</taxon>
        <taxon>Cyanobacteriota</taxon>
        <taxon>Cyanophyceae</taxon>
        <taxon>Synechococcales</taxon>
        <taxon>Synechococcaceae</taxon>
        <taxon>Synechococcus</taxon>
    </lineage>
</organism>
<dbReference type="EC" id="2.4.99.17" evidence="1"/>
<dbReference type="EMBL" id="CP000435">
    <property type="protein sequence ID" value="ABI46506.1"/>
    <property type="molecule type" value="Genomic_DNA"/>
</dbReference>
<dbReference type="SMR" id="Q0ICI5"/>
<dbReference type="STRING" id="64471.sync_0619"/>
<dbReference type="KEGG" id="syg:sync_0619"/>
<dbReference type="eggNOG" id="COG0809">
    <property type="taxonomic scope" value="Bacteria"/>
</dbReference>
<dbReference type="HOGENOM" id="CLU_039110_1_0_3"/>
<dbReference type="UniPathway" id="UPA00392"/>
<dbReference type="Proteomes" id="UP000001961">
    <property type="component" value="Chromosome"/>
</dbReference>
<dbReference type="GO" id="GO:0005737">
    <property type="term" value="C:cytoplasm"/>
    <property type="evidence" value="ECO:0007669"/>
    <property type="project" value="UniProtKB-SubCell"/>
</dbReference>
<dbReference type="GO" id="GO:0051075">
    <property type="term" value="F:S-adenosylmethionine:tRNA ribosyltransferase-isomerase activity"/>
    <property type="evidence" value="ECO:0007669"/>
    <property type="project" value="UniProtKB-EC"/>
</dbReference>
<dbReference type="GO" id="GO:0008616">
    <property type="term" value="P:queuosine biosynthetic process"/>
    <property type="evidence" value="ECO:0007669"/>
    <property type="project" value="UniProtKB-UniRule"/>
</dbReference>
<dbReference type="GO" id="GO:0002099">
    <property type="term" value="P:tRNA wobble guanine modification"/>
    <property type="evidence" value="ECO:0007669"/>
    <property type="project" value="TreeGrafter"/>
</dbReference>
<dbReference type="Gene3D" id="2.40.10.240">
    <property type="entry name" value="QueA-like"/>
    <property type="match status" value="1"/>
</dbReference>
<dbReference type="Gene3D" id="3.40.1780.10">
    <property type="entry name" value="QueA-like"/>
    <property type="match status" value="2"/>
</dbReference>
<dbReference type="HAMAP" id="MF_00113">
    <property type="entry name" value="QueA"/>
    <property type="match status" value="1"/>
</dbReference>
<dbReference type="InterPro" id="IPR003699">
    <property type="entry name" value="QueA"/>
</dbReference>
<dbReference type="InterPro" id="IPR042118">
    <property type="entry name" value="QueA_dom1"/>
</dbReference>
<dbReference type="InterPro" id="IPR042119">
    <property type="entry name" value="QueA_dom2"/>
</dbReference>
<dbReference type="InterPro" id="IPR036100">
    <property type="entry name" value="QueA_sf"/>
</dbReference>
<dbReference type="NCBIfam" id="NF001140">
    <property type="entry name" value="PRK00147.1"/>
    <property type="match status" value="1"/>
</dbReference>
<dbReference type="NCBIfam" id="TIGR00113">
    <property type="entry name" value="queA"/>
    <property type="match status" value="1"/>
</dbReference>
<dbReference type="PANTHER" id="PTHR30307">
    <property type="entry name" value="S-ADENOSYLMETHIONINE:TRNA RIBOSYLTRANSFERASE-ISOMERASE"/>
    <property type="match status" value="1"/>
</dbReference>
<dbReference type="PANTHER" id="PTHR30307:SF0">
    <property type="entry name" value="S-ADENOSYLMETHIONINE:TRNA RIBOSYLTRANSFERASE-ISOMERASE"/>
    <property type="match status" value="1"/>
</dbReference>
<dbReference type="Pfam" id="PF02547">
    <property type="entry name" value="Queuosine_synth"/>
    <property type="match status" value="1"/>
</dbReference>
<dbReference type="SUPFAM" id="SSF111337">
    <property type="entry name" value="QueA-like"/>
    <property type="match status" value="1"/>
</dbReference>
<comment type="function">
    <text evidence="1">Transfers and isomerizes the ribose moiety from AdoMet to the 7-aminomethyl group of 7-deazaguanine (preQ1-tRNA) to give epoxyqueuosine (oQ-tRNA).</text>
</comment>
<comment type="catalytic activity">
    <reaction evidence="1">
        <text>7-aminomethyl-7-carbaguanosine(34) in tRNA + S-adenosyl-L-methionine = epoxyqueuosine(34) in tRNA + adenine + L-methionine + 2 H(+)</text>
        <dbReference type="Rhea" id="RHEA:32155"/>
        <dbReference type="Rhea" id="RHEA-COMP:10342"/>
        <dbReference type="Rhea" id="RHEA-COMP:18582"/>
        <dbReference type="ChEBI" id="CHEBI:15378"/>
        <dbReference type="ChEBI" id="CHEBI:16708"/>
        <dbReference type="ChEBI" id="CHEBI:57844"/>
        <dbReference type="ChEBI" id="CHEBI:59789"/>
        <dbReference type="ChEBI" id="CHEBI:82833"/>
        <dbReference type="ChEBI" id="CHEBI:194443"/>
        <dbReference type="EC" id="2.4.99.17"/>
    </reaction>
</comment>
<comment type="pathway">
    <text evidence="1">tRNA modification; tRNA-queuosine biosynthesis.</text>
</comment>
<comment type="subunit">
    <text evidence="1">Monomer.</text>
</comment>
<comment type="subcellular location">
    <subcellularLocation>
        <location evidence="1">Cytoplasm</location>
    </subcellularLocation>
</comment>
<comment type="similarity">
    <text evidence="1">Belongs to the QueA family.</text>
</comment>
<gene>
    <name evidence="1" type="primary">queA</name>
    <name type="ordered locus">sync_0619</name>
</gene>